<evidence type="ECO:0000255" key="1">
    <source>
        <dbReference type="HAMAP-Rule" id="MF_01628"/>
    </source>
</evidence>
<gene>
    <name evidence="1" type="primary">deoA</name>
    <name type="ordered locus">Bcen2424_6240</name>
</gene>
<accession>A0KCQ9</accession>
<name>TYPH_BURCH</name>
<feature type="chain" id="PRO_0000335771" description="Thymidine phosphorylase">
    <location>
        <begin position="1"/>
        <end position="438"/>
    </location>
</feature>
<organism>
    <name type="scientific">Burkholderia cenocepacia (strain HI2424)</name>
    <dbReference type="NCBI Taxonomy" id="331272"/>
    <lineage>
        <taxon>Bacteria</taxon>
        <taxon>Pseudomonadati</taxon>
        <taxon>Pseudomonadota</taxon>
        <taxon>Betaproteobacteria</taxon>
        <taxon>Burkholderiales</taxon>
        <taxon>Burkholderiaceae</taxon>
        <taxon>Burkholderia</taxon>
        <taxon>Burkholderia cepacia complex</taxon>
    </lineage>
</organism>
<proteinExistence type="inferred from homology"/>
<reference key="1">
    <citation type="submission" date="2006-08" db="EMBL/GenBank/DDBJ databases">
        <title>Complete sequence of chromosome 3 of Burkholderia cenocepacia HI2424.</title>
        <authorList>
            <person name="Copeland A."/>
            <person name="Lucas S."/>
            <person name="Lapidus A."/>
            <person name="Barry K."/>
            <person name="Detter J.C."/>
            <person name="Glavina del Rio T."/>
            <person name="Hammon N."/>
            <person name="Israni S."/>
            <person name="Pitluck S."/>
            <person name="Chain P."/>
            <person name="Malfatti S."/>
            <person name="Shin M."/>
            <person name="Vergez L."/>
            <person name="Schmutz J."/>
            <person name="Larimer F."/>
            <person name="Land M."/>
            <person name="Hauser L."/>
            <person name="Kyrpides N."/>
            <person name="Kim E."/>
            <person name="LiPuma J.J."/>
            <person name="Gonzalez C.F."/>
            <person name="Konstantinidis K."/>
            <person name="Tiedje J.M."/>
            <person name="Richardson P."/>
        </authorList>
    </citation>
    <scope>NUCLEOTIDE SEQUENCE [LARGE SCALE GENOMIC DNA]</scope>
    <source>
        <strain>HI2424</strain>
    </source>
</reference>
<comment type="function">
    <text evidence="1">The enzymes which catalyze the reversible phosphorolysis of pyrimidine nucleosides are involved in the degradation of these compounds and in their utilization as carbon and energy sources, or in the rescue of pyrimidine bases for nucleotide synthesis.</text>
</comment>
<comment type="catalytic activity">
    <reaction evidence="1">
        <text>thymidine + phosphate = 2-deoxy-alpha-D-ribose 1-phosphate + thymine</text>
        <dbReference type="Rhea" id="RHEA:16037"/>
        <dbReference type="ChEBI" id="CHEBI:17748"/>
        <dbReference type="ChEBI" id="CHEBI:17821"/>
        <dbReference type="ChEBI" id="CHEBI:43474"/>
        <dbReference type="ChEBI" id="CHEBI:57259"/>
        <dbReference type="EC" id="2.4.2.4"/>
    </reaction>
</comment>
<comment type="pathway">
    <text evidence="1">Pyrimidine metabolism; dTMP biosynthesis via salvage pathway; dTMP from thymine: step 1/2.</text>
</comment>
<comment type="subunit">
    <text evidence="1">Homodimer.</text>
</comment>
<comment type="similarity">
    <text evidence="1">Belongs to the thymidine/pyrimidine-nucleoside phosphorylase family.</text>
</comment>
<sequence length="438" mass="45454">MFLPQEFIRRKRDGQPLDRDDMAAFVRGVTDGSVTEGQVAAFAMAVYFNDLSTDERVALTLAQRDSGDVLDWRALDLGGPVIDKHSTGGVGDVVSLMLGPMVAACGGYVPMISGRGLGHTGGTLDKLSAIPGYDVMPDTDAFRRTVREVGVAIIGQTARLAPADKRIYAIRDVTATVESVAMITASILSKKLAAGLDGLVMDVKVGSGAFMPTAEKSAELARSIVDVGNGAGMKTTAILTDMNQSLAPCAGNALEVACAIDYLTGKSRPARLHDVTMALSAELLVTGGLARDAAHAREKLQQALDSGAAAERFARMVAALGGPADLLDAPARHLARAAVIVPVPAPVSGVVQRVDCRALGLAVVALGGGRTRAEDAIDVSVGLSALAEIGQRIEAGEPLGFVHARDEAAAAHAVDAIRRGYVLGETGEAPPTLYQRVD</sequence>
<keyword id="KW-0328">Glycosyltransferase</keyword>
<keyword id="KW-0808">Transferase</keyword>
<dbReference type="EC" id="2.4.2.4" evidence="1"/>
<dbReference type="EMBL" id="CP000460">
    <property type="protein sequence ID" value="ABK12972.1"/>
    <property type="molecule type" value="Genomic_DNA"/>
</dbReference>
<dbReference type="RefSeq" id="WP_011545784.1">
    <property type="nucleotide sequence ID" value="NC_008544.1"/>
</dbReference>
<dbReference type="SMR" id="A0KCQ9"/>
<dbReference type="KEGG" id="bch:Bcen2424_6240"/>
<dbReference type="HOGENOM" id="CLU_025040_0_1_4"/>
<dbReference type="UniPathway" id="UPA00578">
    <property type="reaction ID" value="UER00638"/>
</dbReference>
<dbReference type="GO" id="GO:0005829">
    <property type="term" value="C:cytosol"/>
    <property type="evidence" value="ECO:0007669"/>
    <property type="project" value="TreeGrafter"/>
</dbReference>
<dbReference type="GO" id="GO:0004645">
    <property type="term" value="F:1,4-alpha-oligoglucan phosphorylase activity"/>
    <property type="evidence" value="ECO:0007669"/>
    <property type="project" value="InterPro"/>
</dbReference>
<dbReference type="GO" id="GO:0009032">
    <property type="term" value="F:thymidine phosphorylase activity"/>
    <property type="evidence" value="ECO:0007669"/>
    <property type="project" value="UniProtKB-UniRule"/>
</dbReference>
<dbReference type="GO" id="GO:0006206">
    <property type="term" value="P:pyrimidine nucleobase metabolic process"/>
    <property type="evidence" value="ECO:0007669"/>
    <property type="project" value="InterPro"/>
</dbReference>
<dbReference type="GO" id="GO:0046104">
    <property type="term" value="P:thymidine metabolic process"/>
    <property type="evidence" value="ECO:0007669"/>
    <property type="project" value="UniProtKB-UniRule"/>
</dbReference>
<dbReference type="FunFam" id="3.40.1030.10:FF:000001">
    <property type="entry name" value="Thymidine phosphorylase"/>
    <property type="match status" value="1"/>
</dbReference>
<dbReference type="Gene3D" id="3.40.1030.10">
    <property type="entry name" value="Nucleoside phosphorylase/phosphoribosyltransferase catalytic domain"/>
    <property type="match status" value="1"/>
</dbReference>
<dbReference type="Gene3D" id="3.90.1170.30">
    <property type="entry name" value="Pyrimidine nucleoside phosphorylase-like, C-terminal domain"/>
    <property type="match status" value="1"/>
</dbReference>
<dbReference type="Gene3D" id="1.20.970.10">
    <property type="entry name" value="Transferase, Pyrimidine Nucleoside Phosphorylase, Chain C"/>
    <property type="match status" value="1"/>
</dbReference>
<dbReference type="HAMAP" id="MF_01628">
    <property type="entry name" value="Thymid_phosp"/>
    <property type="match status" value="1"/>
</dbReference>
<dbReference type="InterPro" id="IPR000312">
    <property type="entry name" value="Glycosyl_Trfase_fam3"/>
</dbReference>
<dbReference type="InterPro" id="IPR017459">
    <property type="entry name" value="Glycosyl_Trfase_fam3_N_dom"/>
</dbReference>
<dbReference type="InterPro" id="IPR036320">
    <property type="entry name" value="Glycosyl_Trfase_fam3_N_dom_sf"/>
</dbReference>
<dbReference type="InterPro" id="IPR035902">
    <property type="entry name" value="Nuc_phospho_transferase"/>
</dbReference>
<dbReference type="InterPro" id="IPR036566">
    <property type="entry name" value="PYNP-like_C_sf"/>
</dbReference>
<dbReference type="InterPro" id="IPR013102">
    <property type="entry name" value="PYNP_C"/>
</dbReference>
<dbReference type="InterPro" id="IPR018090">
    <property type="entry name" value="Pyrmidine_PPas_bac/euk"/>
</dbReference>
<dbReference type="InterPro" id="IPR017872">
    <property type="entry name" value="Pyrmidine_PPase_CS"/>
</dbReference>
<dbReference type="InterPro" id="IPR000053">
    <property type="entry name" value="Thymidine/pyrmidine_PPase"/>
</dbReference>
<dbReference type="InterPro" id="IPR013465">
    <property type="entry name" value="Thymidine_Pase"/>
</dbReference>
<dbReference type="NCBIfam" id="NF004490">
    <property type="entry name" value="PRK05820.1"/>
    <property type="match status" value="1"/>
</dbReference>
<dbReference type="NCBIfam" id="TIGR02643">
    <property type="entry name" value="T_phosphoryl"/>
    <property type="match status" value="1"/>
</dbReference>
<dbReference type="NCBIfam" id="TIGR02644">
    <property type="entry name" value="Y_phosphoryl"/>
    <property type="match status" value="1"/>
</dbReference>
<dbReference type="PANTHER" id="PTHR10515">
    <property type="entry name" value="THYMIDINE PHOSPHORYLASE"/>
    <property type="match status" value="1"/>
</dbReference>
<dbReference type="PANTHER" id="PTHR10515:SF0">
    <property type="entry name" value="THYMIDINE PHOSPHORYLASE"/>
    <property type="match status" value="1"/>
</dbReference>
<dbReference type="Pfam" id="PF02885">
    <property type="entry name" value="Glycos_trans_3N"/>
    <property type="match status" value="1"/>
</dbReference>
<dbReference type="Pfam" id="PF00591">
    <property type="entry name" value="Glycos_transf_3"/>
    <property type="match status" value="1"/>
</dbReference>
<dbReference type="Pfam" id="PF07831">
    <property type="entry name" value="PYNP_C"/>
    <property type="match status" value="1"/>
</dbReference>
<dbReference type="PIRSF" id="PIRSF000478">
    <property type="entry name" value="TP_PyNP"/>
    <property type="match status" value="1"/>
</dbReference>
<dbReference type="SMART" id="SM00941">
    <property type="entry name" value="PYNP_C"/>
    <property type="match status" value="1"/>
</dbReference>
<dbReference type="SUPFAM" id="SSF52418">
    <property type="entry name" value="Nucleoside phosphorylase/phosphoribosyltransferase catalytic domain"/>
    <property type="match status" value="1"/>
</dbReference>
<dbReference type="SUPFAM" id="SSF47648">
    <property type="entry name" value="Nucleoside phosphorylase/phosphoribosyltransferase N-terminal domain"/>
    <property type="match status" value="1"/>
</dbReference>
<dbReference type="SUPFAM" id="SSF54680">
    <property type="entry name" value="Pyrimidine nucleoside phosphorylase C-terminal domain"/>
    <property type="match status" value="1"/>
</dbReference>
<dbReference type="PROSITE" id="PS00647">
    <property type="entry name" value="THYMID_PHOSPHORYLASE"/>
    <property type="match status" value="1"/>
</dbReference>
<protein>
    <recommendedName>
        <fullName evidence="1">Thymidine phosphorylase</fullName>
        <ecNumber evidence="1">2.4.2.4</ecNumber>
    </recommendedName>
    <alternativeName>
        <fullName evidence="1">TdRPase</fullName>
    </alternativeName>
</protein>